<name>ZKSC8_HUMAN</name>
<dbReference type="EMBL" id="U57796">
    <property type="protein sequence ID" value="AAB02260.1"/>
    <property type="molecule type" value="mRNA"/>
</dbReference>
<dbReference type="EMBL" id="U88080">
    <property type="protein sequence ID" value="AAC51656.1"/>
    <property type="molecule type" value="Genomic_DNA"/>
</dbReference>
<dbReference type="EMBL" id="U88079">
    <property type="protein sequence ID" value="AAC51656.1"/>
    <property type="status" value="JOINED"/>
    <property type="molecule type" value="Genomic_DNA"/>
</dbReference>
<dbReference type="EMBL" id="AK302402">
    <property type="protein sequence ID" value="BAG63713.1"/>
    <property type="molecule type" value="mRNA"/>
</dbReference>
<dbReference type="EMBL" id="AL358933">
    <property type="status" value="NOT_ANNOTATED_CDS"/>
    <property type="molecule type" value="Genomic_DNA"/>
</dbReference>
<dbReference type="EMBL" id="CH471081">
    <property type="protein sequence ID" value="EAX03135.1"/>
    <property type="molecule type" value="Genomic_DNA"/>
</dbReference>
<dbReference type="EMBL" id="BC096282">
    <property type="protein sequence ID" value="AAH96282.1"/>
    <property type="molecule type" value="mRNA"/>
</dbReference>
<dbReference type="EMBL" id="BC096283">
    <property type="protein sequence ID" value="AAH96283.1"/>
    <property type="molecule type" value="mRNA"/>
</dbReference>
<dbReference type="EMBL" id="BC096284">
    <property type="protein sequence ID" value="AAH96284.1"/>
    <property type="molecule type" value="mRNA"/>
</dbReference>
<dbReference type="EMBL" id="BC113961">
    <property type="protein sequence ID" value="AAI13962.1"/>
    <property type="molecule type" value="mRNA"/>
</dbReference>
<dbReference type="EMBL" id="BC130032">
    <property type="protein sequence ID" value="AAI30033.1"/>
    <property type="molecule type" value="mRNA"/>
</dbReference>
<dbReference type="EMBL" id="BC152378">
    <property type="protein sequence ID" value="AAI52379.1"/>
    <property type="molecule type" value="mRNA"/>
</dbReference>
<dbReference type="CCDS" id="CCDS4645.1">
    <molecule id="Q15776-1"/>
</dbReference>
<dbReference type="RefSeq" id="NP_001265048.1">
    <molecule id="Q15776-1"/>
    <property type="nucleotide sequence ID" value="NM_001278119.2"/>
</dbReference>
<dbReference type="RefSeq" id="NP_001265050.1">
    <property type="nucleotide sequence ID" value="NM_001278121.1"/>
</dbReference>
<dbReference type="RefSeq" id="NP_006289.2">
    <molecule id="Q15776-1"/>
    <property type="nucleotide sequence ID" value="NM_006298.4"/>
</dbReference>
<dbReference type="RefSeq" id="XP_011513172.1">
    <molecule id="Q15776-1"/>
    <property type="nucleotide sequence ID" value="XM_011514870.3"/>
</dbReference>
<dbReference type="RefSeq" id="XP_016866755.1">
    <molecule id="Q15776-1"/>
    <property type="nucleotide sequence ID" value="XM_017011266.3"/>
</dbReference>
<dbReference type="RefSeq" id="XP_047275271.1">
    <molecule id="Q15776-1"/>
    <property type="nucleotide sequence ID" value="XM_047419315.1"/>
</dbReference>
<dbReference type="SMR" id="Q15776"/>
<dbReference type="BioGRID" id="113529">
    <property type="interactions" value="145"/>
</dbReference>
<dbReference type="FunCoup" id="Q15776">
    <property type="interactions" value="1493"/>
</dbReference>
<dbReference type="IntAct" id="Q15776">
    <property type="interactions" value="138"/>
</dbReference>
<dbReference type="STRING" id="9606.ENSP00000332750"/>
<dbReference type="iPTMnet" id="Q15776"/>
<dbReference type="PhosphoSitePlus" id="Q15776"/>
<dbReference type="BioMuta" id="ZKSCAN8"/>
<dbReference type="DMDM" id="116242856"/>
<dbReference type="jPOST" id="Q15776"/>
<dbReference type="MassIVE" id="Q15776"/>
<dbReference type="PaxDb" id="9606-ENSP00000332750"/>
<dbReference type="PeptideAtlas" id="Q15776"/>
<dbReference type="ProteomicsDB" id="5520"/>
<dbReference type="ProteomicsDB" id="60756">
    <molecule id="Q15776-1"/>
</dbReference>
<dbReference type="Pumba" id="Q15776"/>
<dbReference type="TopDownProteomics" id="Q15776-1">
    <molecule id="Q15776-1"/>
</dbReference>
<dbReference type="ABCD" id="Q15776">
    <property type="antibodies" value="4 sequenced antibodies"/>
</dbReference>
<dbReference type="Antibodypedia" id="830">
    <property type="antibodies" value="189 antibodies from 26 providers"/>
</dbReference>
<dbReference type="DNASU" id="7745"/>
<dbReference type="Ensembl" id="ENST00000330236.7">
    <molecule id="Q15776-1"/>
    <property type="protein sequence ID" value="ENSP00000332750.5"/>
    <property type="gene ID" value="ENSG00000198315.11"/>
</dbReference>
<dbReference type="Ensembl" id="ENST00000457389.6">
    <molecule id="Q15776-1"/>
    <property type="protein sequence ID" value="ENSP00000402948.2"/>
    <property type="gene ID" value="ENSG00000198315.11"/>
</dbReference>
<dbReference type="Ensembl" id="ENST00000536028.2">
    <molecule id="Q15776-2"/>
    <property type="protein sequence ID" value="ENSP00000439117.1"/>
    <property type="gene ID" value="ENSG00000198315.11"/>
</dbReference>
<dbReference type="Ensembl" id="ENST00000606198.5">
    <molecule id="Q15776-2"/>
    <property type="protein sequence ID" value="ENSP00000475589.1"/>
    <property type="gene ID" value="ENSG00000198315.11"/>
</dbReference>
<dbReference type="GeneID" id="7745"/>
<dbReference type="KEGG" id="hsa:7745"/>
<dbReference type="MANE-Select" id="ENST00000330236.7">
    <property type="protein sequence ID" value="ENSP00000332750.5"/>
    <property type="RefSeq nucleotide sequence ID" value="NM_006298.4"/>
    <property type="RefSeq protein sequence ID" value="NP_006289.2"/>
</dbReference>
<dbReference type="UCSC" id="uc003nkn.3">
    <molecule id="Q15776-1"/>
    <property type="organism name" value="human"/>
</dbReference>
<dbReference type="AGR" id="HGNC:12983"/>
<dbReference type="CTD" id="7745"/>
<dbReference type="DisGeNET" id="7745"/>
<dbReference type="GeneCards" id="ZKSCAN8"/>
<dbReference type="HGNC" id="HGNC:12983">
    <property type="gene designation" value="ZKSCAN8"/>
</dbReference>
<dbReference type="HPA" id="ENSG00000198315">
    <property type="expression patterns" value="Low tissue specificity"/>
</dbReference>
<dbReference type="MIM" id="602240">
    <property type="type" value="gene"/>
</dbReference>
<dbReference type="neXtProt" id="NX_Q15776"/>
<dbReference type="OpenTargets" id="ENSG00000198315"/>
<dbReference type="PharmGKB" id="PA37563"/>
<dbReference type="VEuPathDB" id="HostDB:ENSG00000198315"/>
<dbReference type="eggNOG" id="KOG1721">
    <property type="taxonomic scope" value="Eukaryota"/>
</dbReference>
<dbReference type="GeneTree" id="ENSGT00940000161576"/>
<dbReference type="HOGENOM" id="CLU_002678_53_4_1"/>
<dbReference type="InParanoid" id="Q15776"/>
<dbReference type="OMA" id="HGWEQES"/>
<dbReference type="OrthoDB" id="9451254at2759"/>
<dbReference type="PAN-GO" id="Q15776">
    <property type="GO annotations" value="3 GO annotations based on evolutionary models"/>
</dbReference>
<dbReference type="PhylomeDB" id="Q15776"/>
<dbReference type="TreeFam" id="TF338146"/>
<dbReference type="PathwayCommons" id="Q15776"/>
<dbReference type="Reactome" id="R-HSA-212436">
    <property type="pathway name" value="Generic Transcription Pathway"/>
</dbReference>
<dbReference type="SignaLink" id="Q15776"/>
<dbReference type="BioGRID-ORCS" id="7745">
    <property type="hits" value="6 hits in 1173 CRISPR screens"/>
</dbReference>
<dbReference type="ChiTaRS" id="ZKSCAN8">
    <property type="organism name" value="human"/>
</dbReference>
<dbReference type="GenomeRNAi" id="7745"/>
<dbReference type="Pharos" id="Q15776">
    <property type="development level" value="Tbio"/>
</dbReference>
<dbReference type="PRO" id="PR:Q15776"/>
<dbReference type="Proteomes" id="UP000005640">
    <property type="component" value="Chromosome 6"/>
</dbReference>
<dbReference type="RNAct" id="Q15776">
    <property type="molecule type" value="protein"/>
</dbReference>
<dbReference type="Bgee" id="ENSG00000198315">
    <property type="expression patterns" value="Expressed in ganglionic eminence and 170 other cell types or tissues"/>
</dbReference>
<dbReference type="ExpressionAtlas" id="Q15776">
    <property type="expression patterns" value="baseline and differential"/>
</dbReference>
<dbReference type="GO" id="GO:0005634">
    <property type="term" value="C:nucleus"/>
    <property type="evidence" value="ECO:0007669"/>
    <property type="project" value="UniProtKB-SubCell"/>
</dbReference>
<dbReference type="GO" id="GO:0000981">
    <property type="term" value="F:DNA-binding transcription factor activity, RNA polymerase II-specific"/>
    <property type="evidence" value="ECO:0000318"/>
    <property type="project" value="GO_Central"/>
</dbReference>
<dbReference type="GO" id="GO:0000978">
    <property type="term" value="F:RNA polymerase II cis-regulatory region sequence-specific DNA binding"/>
    <property type="evidence" value="ECO:0000318"/>
    <property type="project" value="GO_Central"/>
</dbReference>
<dbReference type="GO" id="GO:0008270">
    <property type="term" value="F:zinc ion binding"/>
    <property type="evidence" value="ECO:0007669"/>
    <property type="project" value="UniProtKB-KW"/>
</dbReference>
<dbReference type="GO" id="GO:0006357">
    <property type="term" value="P:regulation of transcription by RNA polymerase II"/>
    <property type="evidence" value="ECO:0000318"/>
    <property type="project" value="GO_Central"/>
</dbReference>
<dbReference type="CDD" id="cd07765">
    <property type="entry name" value="KRAB_A-box"/>
    <property type="match status" value="1"/>
</dbReference>
<dbReference type="CDD" id="cd07936">
    <property type="entry name" value="SCAN"/>
    <property type="match status" value="1"/>
</dbReference>
<dbReference type="FunFam" id="3.30.160.60:FF:004137">
    <property type="match status" value="1"/>
</dbReference>
<dbReference type="FunFam" id="3.30.160.60:FF:000198">
    <property type="entry name" value="zinc finger protein 10 isoform X1"/>
    <property type="match status" value="1"/>
</dbReference>
<dbReference type="FunFam" id="3.30.160.60:FF:000794">
    <property type="entry name" value="zinc finger protein 2 isoform X2"/>
    <property type="match status" value="1"/>
</dbReference>
<dbReference type="FunFam" id="1.10.4020.10:FF:000001">
    <property type="entry name" value="zinc finger protein 263 isoform X1"/>
    <property type="match status" value="1"/>
</dbReference>
<dbReference type="FunFam" id="3.30.160.60:FF:002402">
    <property type="entry name" value="Zinc finger protein 347"/>
    <property type="match status" value="1"/>
</dbReference>
<dbReference type="FunFam" id="3.30.160.60:FF:002254">
    <property type="entry name" value="Zinc finger protein 540"/>
    <property type="match status" value="1"/>
</dbReference>
<dbReference type="FunFam" id="3.30.160.60:FF:000737">
    <property type="entry name" value="Zinc finger protein 565"/>
    <property type="match status" value="1"/>
</dbReference>
<dbReference type="FunFam" id="3.30.160.60:FF:000427">
    <property type="entry name" value="Zinc finger with KRAB and SCAN domains 7"/>
    <property type="match status" value="1"/>
</dbReference>
<dbReference type="FunFam" id="3.30.160.60:FF:000529">
    <property type="entry name" value="Zinc finger with KRAB and SCAN domains 8"/>
    <property type="match status" value="2"/>
</dbReference>
<dbReference type="FunFam" id="3.30.160.60:FF:001403">
    <property type="entry name" value="Zinc finger with KRAB and SCAN domains 8"/>
    <property type="match status" value="1"/>
</dbReference>
<dbReference type="Gene3D" id="6.10.140.140">
    <property type="match status" value="1"/>
</dbReference>
<dbReference type="Gene3D" id="3.30.160.60">
    <property type="entry name" value="Classic Zinc Finger"/>
    <property type="match status" value="9"/>
</dbReference>
<dbReference type="Gene3D" id="1.10.4020.10">
    <property type="entry name" value="DNA breaking-rejoining enzymes"/>
    <property type="match status" value="1"/>
</dbReference>
<dbReference type="InterPro" id="IPR001909">
    <property type="entry name" value="KRAB"/>
</dbReference>
<dbReference type="InterPro" id="IPR036051">
    <property type="entry name" value="KRAB_dom_sf"/>
</dbReference>
<dbReference type="InterPro" id="IPR003309">
    <property type="entry name" value="SCAN_dom"/>
</dbReference>
<dbReference type="InterPro" id="IPR038269">
    <property type="entry name" value="SCAN_sf"/>
</dbReference>
<dbReference type="InterPro" id="IPR050527">
    <property type="entry name" value="Snail/Krueppel_Znf"/>
</dbReference>
<dbReference type="InterPro" id="IPR036236">
    <property type="entry name" value="Znf_C2H2_sf"/>
</dbReference>
<dbReference type="InterPro" id="IPR013087">
    <property type="entry name" value="Znf_C2H2_type"/>
</dbReference>
<dbReference type="PANTHER" id="PTHR24388:SF96">
    <property type="entry name" value="GENE, 32687-RELATED"/>
    <property type="match status" value="1"/>
</dbReference>
<dbReference type="PANTHER" id="PTHR24388">
    <property type="entry name" value="ZINC FINGER PROTEIN"/>
    <property type="match status" value="1"/>
</dbReference>
<dbReference type="Pfam" id="PF01352">
    <property type="entry name" value="KRAB"/>
    <property type="match status" value="1"/>
</dbReference>
<dbReference type="Pfam" id="PF02023">
    <property type="entry name" value="SCAN"/>
    <property type="match status" value="1"/>
</dbReference>
<dbReference type="Pfam" id="PF00096">
    <property type="entry name" value="zf-C2H2"/>
    <property type="match status" value="9"/>
</dbReference>
<dbReference type="SMART" id="SM00349">
    <property type="entry name" value="KRAB"/>
    <property type="match status" value="1"/>
</dbReference>
<dbReference type="SMART" id="SM00431">
    <property type="entry name" value="SCAN"/>
    <property type="match status" value="1"/>
</dbReference>
<dbReference type="SMART" id="SM00355">
    <property type="entry name" value="ZnF_C2H2"/>
    <property type="match status" value="9"/>
</dbReference>
<dbReference type="SUPFAM" id="SSF57667">
    <property type="entry name" value="beta-beta-alpha zinc fingers"/>
    <property type="match status" value="5"/>
</dbReference>
<dbReference type="SUPFAM" id="SSF109640">
    <property type="entry name" value="KRAB domain (Kruppel-associated box)"/>
    <property type="match status" value="1"/>
</dbReference>
<dbReference type="SUPFAM" id="SSF47353">
    <property type="entry name" value="Retrovirus capsid dimerization domain-like"/>
    <property type="match status" value="1"/>
</dbReference>
<dbReference type="PROSITE" id="PS50805">
    <property type="entry name" value="KRAB"/>
    <property type="match status" value="1"/>
</dbReference>
<dbReference type="PROSITE" id="PS50804">
    <property type="entry name" value="SCAN_BOX"/>
    <property type="match status" value="1"/>
</dbReference>
<dbReference type="PROSITE" id="PS00028">
    <property type="entry name" value="ZINC_FINGER_C2H2_1"/>
    <property type="match status" value="9"/>
</dbReference>
<dbReference type="PROSITE" id="PS50157">
    <property type="entry name" value="ZINC_FINGER_C2H2_2"/>
    <property type="match status" value="9"/>
</dbReference>
<organism>
    <name type="scientific">Homo sapiens</name>
    <name type="common">Human</name>
    <dbReference type="NCBI Taxonomy" id="9606"/>
    <lineage>
        <taxon>Eukaryota</taxon>
        <taxon>Metazoa</taxon>
        <taxon>Chordata</taxon>
        <taxon>Craniata</taxon>
        <taxon>Vertebrata</taxon>
        <taxon>Euteleostomi</taxon>
        <taxon>Mammalia</taxon>
        <taxon>Eutheria</taxon>
        <taxon>Euarchontoglires</taxon>
        <taxon>Primates</taxon>
        <taxon>Haplorrhini</taxon>
        <taxon>Catarrhini</taxon>
        <taxon>Hominidae</taxon>
        <taxon>Homo</taxon>
    </lineage>
</organism>
<gene>
    <name type="primary">ZKSCAN8</name>
    <name type="synonym">ZNF192</name>
</gene>
<proteinExistence type="evidence at protein level"/>
<feature type="chain" id="PRO_0000047445" description="Zinc finger protein with KRAB and SCAN domains 8">
    <location>
        <begin position="1"/>
        <end position="578"/>
    </location>
</feature>
<feature type="domain" description="SCAN box" evidence="4">
    <location>
        <begin position="51"/>
        <end position="133"/>
    </location>
</feature>
<feature type="domain" description="KRAB" evidence="3">
    <location>
        <begin position="220"/>
        <end position="316"/>
    </location>
</feature>
<feature type="zinc finger region" description="C2H2-type 1" evidence="2">
    <location>
        <begin position="322"/>
        <end position="344"/>
    </location>
</feature>
<feature type="zinc finger region" description="C2H2-type 2" evidence="2">
    <location>
        <begin position="350"/>
        <end position="372"/>
    </location>
</feature>
<feature type="zinc finger region" description="C2H2-type 3" evidence="2">
    <location>
        <begin position="378"/>
        <end position="400"/>
    </location>
</feature>
<feature type="zinc finger region" description="C2H2-type 4" evidence="2">
    <location>
        <begin position="406"/>
        <end position="428"/>
    </location>
</feature>
<feature type="zinc finger region" description="C2H2-type 5" evidence="2">
    <location>
        <begin position="434"/>
        <end position="456"/>
    </location>
</feature>
<feature type="zinc finger region" description="C2H2-type 6" evidence="2">
    <location>
        <begin position="462"/>
        <end position="484"/>
    </location>
</feature>
<feature type="zinc finger region" description="C2H2-type 7" evidence="2">
    <location>
        <begin position="490"/>
        <end position="512"/>
    </location>
</feature>
<feature type="zinc finger region" description="C2H2-type 8" evidence="2">
    <location>
        <begin position="518"/>
        <end position="540"/>
    </location>
</feature>
<feature type="zinc finger region" description="C2H2-type 9" evidence="2">
    <location>
        <begin position="546"/>
        <end position="568"/>
    </location>
</feature>
<feature type="region of interest" description="Disordered" evidence="5">
    <location>
        <begin position="1"/>
        <end position="20"/>
    </location>
</feature>
<feature type="region of interest" description="Disordered" evidence="5">
    <location>
        <begin position="158"/>
        <end position="205"/>
    </location>
</feature>
<feature type="compositionally biased region" description="Polar residues" evidence="5">
    <location>
        <begin position="165"/>
        <end position="205"/>
    </location>
</feature>
<feature type="modified residue" description="Phosphoserine" evidence="9 10">
    <location>
        <position position="12"/>
    </location>
</feature>
<feature type="modified residue" description="Phosphoserine" evidence="1">
    <location>
        <position position="201"/>
    </location>
</feature>
<feature type="cross-link" description="Glycyl lysine isopeptide (Lys-Gly) (interchain with G-Cter in SUMO2)" evidence="13">
    <location>
        <position position="26"/>
    </location>
</feature>
<feature type="cross-link" description="Glycyl lysine isopeptide (Lys-Gly) (interchain with G-Cter in SUMO2)" evidence="13">
    <location>
        <position position="176"/>
    </location>
</feature>
<feature type="cross-link" description="Glycyl lysine isopeptide (Lys-Gly) (interchain with G-Cter in SUMO2)" evidence="13">
    <location>
        <position position="199"/>
    </location>
</feature>
<feature type="cross-link" description="Glycyl lysine isopeptide (Lys-Gly) (interchain with G-Cter in SUMO2)" evidence="1">
    <location>
        <position position="221"/>
    </location>
</feature>
<feature type="cross-link" description="Glycyl lysine isopeptide (Lys-Gly) (interchain with G-Cter in SUMO2)" evidence="13">
    <location>
        <position position="272"/>
    </location>
</feature>
<feature type="cross-link" description="Glycyl lysine isopeptide (Lys-Gly) (interchain with G-Cter in SUMO2)" evidence="13">
    <location>
        <position position="288"/>
    </location>
</feature>
<feature type="cross-link" description="Glycyl lysine isopeptide (Lys-Gly) (interchain with G-Cter in SUMO2)" evidence="13">
    <location>
        <position position="374"/>
    </location>
</feature>
<feature type="cross-link" description="Glycyl lysine isopeptide (Lys-Gly) (interchain with G-Cter in SUMO2)" evidence="1">
    <location>
        <position position="376"/>
    </location>
</feature>
<feature type="cross-link" description="Glycyl lysine isopeptide (Lys-Gly) (interchain with G-Cter in SUMO2)" evidence="1">
    <location>
        <position position="413"/>
    </location>
</feature>
<feature type="cross-link" description="Glycyl lysine isopeptide (Lys-Gly) (interchain with G-Cter in SUMO2)" evidence="13">
    <location>
        <position position="441"/>
    </location>
</feature>
<feature type="cross-link" description="Glycyl lysine isopeptide (Lys-Gly) (interchain with G-Cter in SUMO2)" evidence="13">
    <location>
        <position position="502"/>
    </location>
</feature>
<feature type="cross-link" description="Glycyl lysine isopeptide (Lys-Gly) (interchain with G-Cter in SUMO2)" evidence="11 12 13">
    <location>
        <position position="572"/>
    </location>
</feature>
<feature type="splice variant" id="VSP_056437" description="In isoform 2." evidence="7">
    <original>ARVHGHRVLWEEVVHSA</original>
    <variation>RRRSQLAYMDIGYSGRR</variation>
    <location>
        <begin position="142"/>
        <end position="158"/>
    </location>
</feature>
<feature type="splice variant" id="VSP_056438" description="In isoform 2." evidence="7">
    <location>
        <begin position="159"/>
        <end position="578"/>
    </location>
</feature>
<feature type="sequence variant" id="VAR_009877" description="In dbSNP:rs62620225." evidence="6">
    <original>P</original>
    <variation>L</variation>
    <location>
        <position position="163"/>
    </location>
</feature>
<feature type="sequence conflict" description="In Ref. 1; AAB02260/AAC51656." evidence="8" ref="1">
    <original>D</original>
    <variation>A</variation>
    <location>
        <position position="34"/>
    </location>
</feature>
<feature type="sequence conflict" description="In Ref. 1; AAB02260/AAC51656." evidence="8" ref="1">
    <original>E</original>
    <variation>D</variation>
    <location>
        <position position="113"/>
    </location>
</feature>
<feature type="sequence conflict" description="In Ref. 5; AAH96283." evidence="8" ref="5">
    <original>E</original>
    <variation>G</variation>
    <location>
        <position position="152"/>
    </location>
</feature>
<feature type="sequence conflict" description="In Ref. 5; AAH96284." evidence="8" ref="5">
    <original>Q</original>
    <variation>R</variation>
    <location>
        <position position="407"/>
    </location>
</feature>
<feature type="sequence conflict" description="In Ref. 5; AAH96283." evidence="8" ref="5">
    <original>L</original>
    <variation>F</variation>
    <location>
        <position position="477"/>
    </location>
</feature>
<keyword id="KW-0025">Alternative splicing</keyword>
<keyword id="KW-0238">DNA-binding</keyword>
<keyword id="KW-1017">Isopeptide bond</keyword>
<keyword id="KW-0479">Metal-binding</keyword>
<keyword id="KW-0539">Nucleus</keyword>
<keyword id="KW-0597">Phosphoprotein</keyword>
<keyword id="KW-1267">Proteomics identification</keyword>
<keyword id="KW-1185">Reference proteome</keyword>
<keyword id="KW-0677">Repeat</keyword>
<keyword id="KW-0804">Transcription</keyword>
<keyword id="KW-0805">Transcription regulation</keyword>
<keyword id="KW-0832">Ubl conjugation</keyword>
<keyword id="KW-0862">Zinc</keyword>
<keyword id="KW-0863">Zinc-finger</keyword>
<comment type="function">
    <text>May be involved in transcriptional regulation.</text>
</comment>
<comment type="interaction">
    <interactant intactId="EBI-2602314">
        <id>Q15776</id>
    </interactant>
    <interactant intactId="EBI-10976677">
        <id>G5E9A7</id>
        <label>DMWD</label>
    </interactant>
    <organismsDiffer>false</organismsDiffer>
    <experiments>3</experiments>
</comment>
<comment type="interaction">
    <interactant intactId="EBI-2602314">
        <id>Q15776</id>
    </interactant>
    <interactant intactId="EBI-21603100">
        <id>P26378-2</id>
        <label>ELAVL4</label>
    </interactant>
    <organismsDiffer>false</organismsDiffer>
    <experiments>3</experiments>
</comment>
<comment type="interaction">
    <interactant intactId="EBI-2602314">
        <id>Q15776</id>
    </interactant>
    <interactant intactId="EBI-747754">
        <id>P28799</id>
        <label>GRN</label>
    </interactant>
    <organismsDiffer>false</organismsDiffer>
    <experiments>3</experiments>
</comment>
<comment type="interaction">
    <interactant intactId="EBI-2602314">
        <id>Q15776</id>
    </interactant>
    <interactant intactId="EBI-8561769">
        <id>Q5SUL5</id>
        <label>HLA-A</label>
    </interactant>
    <organismsDiffer>false</organismsDiffer>
    <experiments>3</experiments>
</comment>
<comment type="interaction">
    <interactant intactId="EBI-2602314">
        <id>Q15776</id>
    </interactant>
    <interactant intactId="EBI-466029">
        <id>P42858</id>
        <label>HTT</label>
    </interactant>
    <organismsDiffer>false</organismsDiffer>
    <experiments>9</experiments>
</comment>
<comment type="interaction">
    <interactant intactId="EBI-2602314">
        <id>Q15776</id>
    </interactant>
    <interactant intactId="EBI-399080">
        <id>Q92993</id>
        <label>KAT5</label>
    </interactant>
    <organismsDiffer>false</organismsDiffer>
    <experiments>3</experiments>
</comment>
<comment type="interaction">
    <interactant intactId="EBI-2602314">
        <id>Q15776</id>
    </interactant>
    <interactant intactId="EBI-10975473">
        <id>O60333-2</id>
        <label>KIF1B</label>
    </interactant>
    <organismsDiffer>false</organismsDiffer>
    <experiments>3</experiments>
</comment>
<comment type="interaction">
    <interactant intactId="EBI-2602314">
        <id>Q15776</id>
    </interactant>
    <interactant intactId="EBI-351935">
        <id>P02545</id>
        <label>LMNA</label>
    </interactant>
    <organismsDiffer>false</organismsDiffer>
    <experiments>3</experiments>
</comment>
<comment type="interaction">
    <interactant intactId="EBI-2602314">
        <id>Q15776</id>
    </interactant>
    <interactant intactId="EBI-11742507">
        <id>Q8TAP4-4</id>
        <label>LMO3</label>
    </interactant>
    <organismsDiffer>false</organismsDiffer>
    <experiments>3</experiments>
</comment>
<comment type="interaction">
    <interactant intactId="EBI-2602314">
        <id>Q15776</id>
    </interactant>
    <interactant intactId="EBI-299134">
        <id>P61326</id>
        <label>MAGOH</label>
    </interactant>
    <organismsDiffer>false</organismsDiffer>
    <experiments>3</experiments>
</comment>
<comment type="interaction">
    <interactant intactId="EBI-2602314">
        <id>Q15776</id>
    </interactant>
    <interactant intactId="EBI-475646">
        <id>P07196</id>
        <label>NEFL</label>
    </interactant>
    <organismsDiffer>false</organismsDiffer>
    <experiments>3</experiments>
</comment>
<comment type="interaction">
    <interactant intactId="EBI-2602314">
        <id>Q15776</id>
    </interactant>
    <interactant intactId="EBI-1014472">
        <id>P35240</id>
        <label>NF2</label>
    </interactant>
    <organismsDiffer>false</organismsDiffer>
    <experiments>3</experiments>
</comment>
<comment type="interaction">
    <interactant intactId="EBI-2602314">
        <id>Q15776</id>
    </interactant>
    <interactant intactId="EBI-25884072">
        <id>P62937-2</id>
        <label>PPIA</label>
    </interactant>
    <organismsDiffer>false</organismsDiffer>
    <experiments>3</experiments>
</comment>
<comment type="interaction">
    <interactant intactId="EBI-2602314">
        <id>Q15776</id>
    </interactant>
    <interactant intactId="EBI-749195">
        <id>P60891</id>
        <label>PRPS1</label>
    </interactant>
    <organismsDiffer>false</organismsDiffer>
    <experiments>3</experiments>
</comment>
<comment type="interaction">
    <interactant intactId="EBI-2602314">
        <id>Q15776</id>
    </interactant>
    <interactant intactId="EBI-396669">
        <id>Q9Y3C5</id>
        <label>RNF11</label>
    </interactant>
    <organismsDiffer>false</organismsDiffer>
    <experiments>3</experiments>
</comment>
<comment type="interaction">
    <interactant intactId="EBI-2602314">
        <id>Q15776</id>
    </interactant>
    <interactant intactId="EBI-9090795">
        <id>Q15047-2</id>
        <label>SETDB1</label>
    </interactant>
    <organismsDiffer>false</organismsDiffer>
    <experiments>3</experiments>
</comment>
<comment type="interaction">
    <interactant intactId="EBI-2602314">
        <id>Q15776</id>
    </interactant>
    <interactant intactId="EBI-5235340">
        <id>Q7Z699</id>
        <label>SPRED1</label>
    </interactant>
    <organismsDiffer>false</organismsDiffer>
    <experiments>3</experiments>
</comment>
<comment type="interaction">
    <interactant intactId="EBI-2602314">
        <id>Q15776</id>
    </interactant>
    <interactant intactId="EBI-710310">
        <id>Q15560</id>
        <label>TCEA2</label>
    </interactant>
    <organismsDiffer>false</organismsDiffer>
    <experiments>3</experiments>
</comment>
<comment type="interaction">
    <interactant intactId="EBI-2602314">
        <id>Q15776</id>
    </interactant>
    <interactant intactId="EBI-720609">
        <id>O76024</id>
        <label>WFS1</label>
    </interactant>
    <organismsDiffer>false</organismsDiffer>
    <experiments>3</experiments>
</comment>
<comment type="interaction">
    <interactant intactId="EBI-2602314">
        <id>Q15776</id>
    </interactant>
    <interactant intactId="EBI-359832">
        <id>P61981</id>
        <label>YWHAG</label>
    </interactant>
    <organismsDiffer>false</organismsDiffer>
    <experiments>3</experiments>
</comment>
<comment type="interaction">
    <interactant intactId="EBI-2602314">
        <id>Q15776</id>
    </interactant>
    <interactant intactId="EBI-12010736">
        <id>Q8N0Y2-2</id>
        <label>ZNF444</label>
    </interactant>
    <organismsDiffer>false</organismsDiffer>
    <experiments>4</experiments>
</comment>
<comment type="interaction">
    <interactant intactId="EBI-2602314">
        <id>Q15776</id>
    </interactant>
    <interactant intactId="EBI-6427977">
        <id>Q96SQ5</id>
        <label>ZNF587</label>
    </interactant>
    <organismsDiffer>false</organismsDiffer>
    <experiments>3</experiments>
</comment>
<comment type="subcellular location">
    <subcellularLocation>
        <location evidence="4">Nucleus</location>
    </subcellularLocation>
</comment>
<comment type="alternative products">
    <event type="alternative splicing"/>
    <isoform>
        <id>Q15776-1</id>
        <name>1</name>
        <sequence type="displayed"/>
    </isoform>
    <isoform>
        <id>Q15776-2</id>
        <name>2</name>
        <sequence type="described" ref="VSP_056437 VSP_056438"/>
    </isoform>
</comment>
<comment type="similarity">
    <text evidence="8">Belongs to the krueppel C2H2-type zinc-finger protein family.</text>
</comment>
<sequence>MAEESRKPSAPSPPDQTPEEDLVIVKVEEDHGWDQESSLHESNPLGQEVFRLRFRQLRYQETLGPREALIQLRALCHQWLRPDLNTKEQILELLVLEQFLTILPEELQTLVKEHQLENGEEVVTLLEDLERQIDILGRPVSARVHGHRVLWEEVVHSASAPEPPNTQLQSEATQHKSPVPQESQERAMSTSQSPTRSQKGSSGDQEMTATLLTAGFQTLEKIEDMAVSLIREEWLLDPSQKDLCRDNRPENFRNMFSLGGETRSENRELASKQVISTGIQPHGETAAKCNGDVIRGLEHEEARDLLGRLERQRGNPTQERRHKCDECGKSFAQSSGLVRHWRIHTGEKPYQCNVCGKAFSYRSALLSHQDIHNKVKRYHCKECGKAFSQNTGLILHQRIHTGEKPYQCNQCGKAFSQSAGLILHQRIHSGERPYECNECGKAFSHSSHLIGHQRIHTGEKPYECDECGKTFRRSSHLIGHQRSHTGEKPYKCNECGRAFSQKSGLIEHQRIHTGERPYKCKECGKAFNGNTGLIQHLRIHTGEKPYQCNECGKAFIQRSSLIRHQRIHSGEKSESISV</sequence>
<reference key="1">
    <citation type="journal article" date="1997" name="Genomics">
        <title>Three genes encoding zinc finger proteins on human chromosome 6p21.3: members of a new subclass of the Kruppel gene family containing the conserved SCAN box domain.</title>
        <authorList>
            <person name="Lee P.L."/>
            <person name="Gelbart T."/>
            <person name="West C."/>
            <person name="Adams M."/>
            <person name="Blackstone R."/>
            <person name="Beutler E."/>
        </authorList>
    </citation>
    <scope>NUCLEOTIDE SEQUENCE [GENOMIC DNA / MRNA] (ISOFORM 1)</scope>
    <scope>VARIANT LEU-163</scope>
    <source>
        <tissue>Ovary</tissue>
    </source>
</reference>
<reference key="2">
    <citation type="journal article" date="2004" name="Nat. Genet.">
        <title>Complete sequencing and characterization of 21,243 full-length human cDNAs.</title>
        <authorList>
            <person name="Ota T."/>
            <person name="Suzuki Y."/>
            <person name="Nishikawa T."/>
            <person name="Otsuki T."/>
            <person name="Sugiyama T."/>
            <person name="Irie R."/>
            <person name="Wakamatsu A."/>
            <person name="Hayashi K."/>
            <person name="Sato H."/>
            <person name="Nagai K."/>
            <person name="Kimura K."/>
            <person name="Makita H."/>
            <person name="Sekine M."/>
            <person name="Obayashi M."/>
            <person name="Nishi T."/>
            <person name="Shibahara T."/>
            <person name="Tanaka T."/>
            <person name="Ishii S."/>
            <person name="Yamamoto J."/>
            <person name="Saito K."/>
            <person name="Kawai Y."/>
            <person name="Isono Y."/>
            <person name="Nakamura Y."/>
            <person name="Nagahari K."/>
            <person name="Murakami K."/>
            <person name="Yasuda T."/>
            <person name="Iwayanagi T."/>
            <person name="Wagatsuma M."/>
            <person name="Shiratori A."/>
            <person name="Sudo H."/>
            <person name="Hosoiri T."/>
            <person name="Kaku Y."/>
            <person name="Kodaira H."/>
            <person name="Kondo H."/>
            <person name="Sugawara M."/>
            <person name="Takahashi M."/>
            <person name="Kanda K."/>
            <person name="Yokoi T."/>
            <person name="Furuya T."/>
            <person name="Kikkawa E."/>
            <person name="Omura Y."/>
            <person name="Abe K."/>
            <person name="Kamihara K."/>
            <person name="Katsuta N."/>
            <person name="Sato K."/>
            <person name="Tanikawa M."/>
            <person name="Yamazaki M."/>
            <person name="Ninomiya K."/>
            <person name="Ishibashi T."/>
            <person name="Yamashita H."/>
            <person name="Murakawa K."/>
            <person name="Fujimori K."/>
            <person name="Tanai H."/>
            <person name="Kimata M."/>
            <person name="Watanabe M."/>
            <person name="Hiraoka S."/>
            <person name="Chiba Y."/>
            <person name="Ishida S."/>
            <person name="Ono Y."/>
            <person name="Takiguchi S."/>
            <person name="Watanabe S."/>
            <person name="Yosida M."/>
            <person name="Hotuta T."/>
            <person name="Kusano J."/>
            <person name="Kanehori K."/>
            <person name="Takahashi-Fujii A."/>
            <person name="Hara H."/>
            <person name="Tanase T.-O."/>
            <person name="Nomura Y."/>
            <person name="Togiya S."/>
            <person name="Komai F."/>
            <person name="Hara R."/>
            <person name="Takeuchi K."/>
            <person name="Arita M."/>
            <person name="Imose N."/>
            <person name="Musashino K."/>
            <person name="Yuuki H."/>
            <person name="Oshima A."/>
            <person name="Sasaki N."/>
            <person name="Aotsuka S."/>
            <person name="Yoshikawa Y."/>
            <person name="Matsunawa H."/>
            <person name="Ichihara T."/>
            <person name="Shiohata N."/>
            <person name="Sano S."/>
            <person name="Moriya S."/>
            <person name="Momiyama H."/>
            <person name="Satoh N."/>
            <person name="Takami S."/>
            <person name="Terashima Y."/>
            <person name="Suzuki O."/>
            <person name="Nakagawa S."/>
            <person name="Senoh A."/>
            <person name="Mizoguchi H."/>
            <person name="Goto Y."/>
            <person name="Shimizu F."/>
            <person name="Wakebe H."/>
            <person name="Hishigaki H."/>
            <person name="Watanabe T."/>
            <person name="Sugiyama A."/>
            <person name="Takemoto M."/>
            <person name="Kawakami B."/>
            <person name="Yamazaki M."/>
            <person name="Watanabe K."/>
            <person name="Kumagai A."/>
            <person name="Itakura S."/>
            <person name="Fukuzumi Y."/>
            <person name="Fujimori Y."/>
            <person name="Komiyama M."/>
            <person name="Tashiro H."/>
            <person name="Tanigami A."/>
            <person name="Fujiwara T."/>
            <person name="Ono T."/>
            <person name="Yamada K."/>
            <person name="Fujii Y."/>
            <person name="Ozaki K."/>
            <person name="Hirao M."/>
            <person name="Ohmori Y."/>
            <person name="Kawabata A."/>
            <person name="Hikiji T."/>
            <person name="Kobatake N."/>
            <person name="Inagaki H."/>
            <person name="Ikema Y."/>
            <person name="Okamoto S."/>
            <person name="Okitani R."/>
            <person name="Kawakami T."/>
            <person name="Noguchi S."/>
            <person name="Itoh T."/>
            <person name="Shigeta K."/>
            <person name="Senba T."/>
            <person name="Matsumura K."/>
            <person name="Nakajima Y."/>
            <person name="Mizuno T."/>
            <person name="Morinaga M."/>
            <person name="Sasaki M."/>
            <person name="Togashi T."/>
            <person name="Oyama M."/>
            <person name="Hata H."/>
            <person name="Watanabe M."/>
            <person name="Komatsu T."/>
            <person name="Mizushima-Sugano J."/>
            <person name="Satoh T."/>
            <person name="Shirai Y."/>
            <person name="Takahashi Y."/>
            <person name="Nakagawa K."/>
            <person name="Okumura K."/>
            <person name="Nagase T."/>
            <person name="Nomura N."/>
            <person name="Kikuchi H."/>
            <person name="Masuho Y."/>
            <person name="Yamashita R."/>
            <person name="Nakai K."/>
            <person name="Yada T."/>
            <person name="Nakamura Y."/>
            <person name="Ohara O."/>
            <person name="Isogai T."/>
            <person name="Sugano S."/>
        </authorList>
    </citation>
    <scope>NUCLEOTIDE SEQUENCE [LARGE SCALE MRNA] (ISOFORM 2)</scope>
    <source>
        <tissue>Testis</tissue>
    </source>
</reference>
<reference key="3">
    <citation type="journal article" date="2003" name="Nature">
        <title>The DNA sequence and analysis of human chromosome 6.</title>
        <authorList>
            <person name="Mungall A.J."/>
            <person name="Palmer S.A."/>
            <person name="Sims S.K."/>
            <person name="Edwards C.A."/>
            <person name="Ashurst J.L."/>
            <person name="Wilming L."/>
            <person name="Jones M.C."/>
            <person name="Horton R."/>
            <person name="Hunt S.E."/>
            <person name="Scott C.E."/>
            <person name="Gilbert J.G.R."/>
            <person name="Clamp M.E."/>
            <person name="Bethel G."/>
            <person name="Milne S."/>
            <person name="Ainscough R."/>
            <person name="Almeida J.P."/>
            <person name="Ambrose K.D."/>
            <person name="Andrews T.D."/>
            <person name="Ashwell R.I.S."/>
            <person name="Babbage A.K."/>
            <person name="Bagguley C.L."/>
            <person name="Bailey J."/>
            <person name="Banerjee R."/>
            <person name="Barker D.J."/>
            <person name="Barlow K.F."/>
            <person name="Bates K."/>
            <person name="Beare D.M."/>
            <person name="Beasley H."/>
            <person name="Beasley O."/>
            <person name="Bird C.P."/>
            <person name="Blakey S.E."/>
            <person name="Bray-Allen S."/>
            <person name="Brook J."/>
            <person name="Brown A.J."/>
            <person name="Brown J.Y."/>
            <person name="Burford D.C."/>
            <person name="Burrill W."/>
            <person name="Burton J."/>
            <person name="Carder C."/>
            <person name="Carter N.P."/>
            <person name="Chapman J.C."/>
            <person name="Clark S.Y."/>
            <person name="Clark G."/>
            <person name="Clee C.M."/>
            <person name="Clegg S."/>
            <person name="Cobley V."/>
            <person name="Collier R.E."/>
            <person name="Collins J.E."/>
            <person name="Colman L.K."/>
            <person name="Corby N.R."/>
            <person name="Coville G.J."/>
            <person name="Culley K.M."/>
            <person name="Dhami P."/>
            <person name="Davies J."/>
            <person name="Dunn M."/>
            <person name="Earthrowl M.E."/>
            <person name="Ellington A.E."/>
            <person name="Evans K.A."/>
            <person name="Faulkner L."/>
            <person name="Francis M.D."/>
            <person name="Frankish A."/>
            <person name="Frankland J."/>
            <person name="French L."/>
            <person name="Garner P."/>
            <person name="Garnett J."/>
            <person name="Ghori M.J."/>
            <person name="Gilby L.M."/>
            <person name="Gillson C.J."/>
            <person name="Glithero R.J."/>
            <person name="Grafham D.V."/>
            <person name="Grant M."/>
            <person name="Gribble S."/>
            <person name="Griffiths C."/>
            <person name="Griffiths M.N.D."/>
            <person name="Hall R."/>
            <person name="Halls K.S."/>
            <person name="Hammond S."/>
            <person name="Harley J.L."/>
            <person name="Hart E.A."/>
            <person name="Heath P.D."/>
            <person name="Heathcott R."/>
            <person name="Holmes S.J."/>
            <person name="Howden P.J."/>
            <person name="Howe K.L."/>
            <person name="Howell G.R."/>
            <person name="Huckle E."/>
            <person name="Humphray S.J."/>
            <person name="Humphries M.D."/>
            <person name="Hunt A.R."/>
            <person name="Johnson C.M."/>
            <person name="Joy A.A."/>
            <person name="Kay M."/>
            <person name="Keenan S.J."/>
            <person name="Kimberley A.M."/>
            <person name="King A."/>
            <person name="Laird G.K."/>
            <person name="Langford C."/>
            <person name="Lawlor S."/>
            <person name="Leongamornlert D.A."/>
            <person name="Leversha M."/>
            <person name="Lloyd C.R."/>
            <person name="Lloyd D.M."/>
            <person name="Loveland J.E."/>
            <person name="Lovell J."/>
            <person name="Martin S."/>
            <person name="Mashreghi-Mohammadi M."/>
            <person name="Maslen G.L."/>
            <person name="Matthews L."/>
            <person name="McCann O.T."/>
            <person name="McLaren S.J."/>
            <person name="McLay K."/>
            <person name="McMurray A."/>
            <person name="Moore M.J.F."/>
            <person name="Mullikin J.C."/>
            <person name="Niblett D."/>
            <person name="Nickerson T."/>
            <person name="Novik K.L."/>
            <person name="Oliver K."/>
            <person name="Overton-Larty E.K."/>
            <person name="Parker A."/>
            <person name="Patel R."/>
            <person name="Pearce A.V."/>
            <person name="Peck A.I."/>
            <person name="Phillimore B.J.C.T."/>
            <person name="Phillips S."/>
            <person name="Plumb R.W."/>
            <person name="Porter K.M."/>
            <person name="Ramsey Y."/>
            <person name="Ranby S.A."/>
            <person name="Rice C.M."/>
            <person name="Ross M.T."/>
            <person name="Searle S.M."/>
            <person name="Sehra H.K."/>
            <person name="Sheridan E."/>
            <person name="Skuce C.D."/>
            <person name="Smith S."/>
            <person name="Smith M."/>
            <person name="Spraggon L."/>
            <person name="Squares S.L."/>
            <person name="Steward C.A."/>
            <person name="Sycamore N."/>
            <person name="Tamlyn-Hall G."/>
            <person name="Tester J."/>
            <person name="Theaker A.J."/>
            <person name="Thomas D.W."/>
            <person name="Thorpe A."/>
            <person name="Tracey A."/>
            <person name="Tromans A."/>
            <person name="Tubby B."/>
            <person name="Wall M."/>
            <person name="Wallis J.M."/>
            <person name="West A.P."/>
            <person name="White S.S."/>
            <person name="Whitehead S.L."/>
            <person name="Whittaker H."/>
            <person name="Wild A."/>
            <person name="Willey D.J."/>
            <person name="Wilmer T.E."/>
            <person name="Wood J.M."/>
            <person name="Wray P.W."/>
            <person name="Wyatt J.C."/>
            <person name="Young L."/>
            <person name="Younger R.M."/>
            <person name="Bentley D.R."/>
            <person name="Coulson A."/>
            <person name="Durbin R.M."/>
            <person name="Hubbard T."/>
            <person name="Sulston J.E."/>
            <person name="Dunham I."/>
            <person name="Rogers J."/>
            <person name="Beck S."/>
        </authorList>
    </citation>
    <scope>NUCLEOTIDE SEQUENCE [LARGE SCALE GENOMIC DNA]</scope>
</reference>
<reference key="4">
    <citation type="submission" date="2005-07" db="EMBL/GenBank/DDBJ databases">
        <authorList>
            <person name="Mural R.J."/>
            <person name="Istrail S."/>
            <person name="Sutton G.G."/>
            <person name="Florea L."/>
            <person name="Halpern A.L."/>
            <person name="Mobarry C.M."/>
            <person name="Lippert R."/>
            <person name="Walenz B."/>
            <person name="Shatkay H."/>
            <person name="Dew I."/>
            <person name="Miller J.R."/>
            <person name="Flanigan M.J."/>
            <person name="Edwards N.J."/>
            <person name="Bolanos R."/>
            <person name="Fasulo D."/>
            <person name="Halldorsson B.V."/>
            <person name="Hannenhalli S."/>
            <person name="Turner R."/>
            <person name="Yooseph S."/>
            <person name="Lu F."/>
            <person name="Nusskern D.R."/>
            <person name="Shue B.C."/>
            <person name="Zheng X.H."/>
            <person name="Zhong F."/>
            <person name="Delcher A.L."/>
            <person name="Huson D.H."/>
            <person name="Kravitz S.A."/>
            <person name="Mouchard L."/>
            <person name="Reinert K."/>
            <person name="Remington K.A."/>
            <person name="Clark A.G."/>
            <person name="Waterman M.S."/>
            <person name="Eichler E.E."/>
            <person name="Adams M.D."/>
            <person name="Hunkapiller M.W."/>
            <person name="Myers E.W."/>
            <person name="Venter J.C."/>
        </authorList>
    </citation>
    <scope>NUCLEOTIDE SEQUENCE [LARGE SCALE GENOMIC DNA]</scope>
</reference>
<reference key="5">
    <citation type="journal article" date="2004" name="Genome Res.">
        <title>The status, quality, and expansion of the NIH full-length cDNA project: the Mammalian Gene Collection (MGC).</title>
        <authorList>
            <consortium name="The MGC Project Team"/>
        </authorList>
    </citation>
    <scope>NUCLEOTIDE SEQUENCE [LARGE SCALE MRNA] (ISOFORM 1)</scope>
</reference>
<reference key="6">
    <citation type="journal article" date="1995" name="Blood Cells Mol. Dis.">
        <title>A strategy for cloning the hereditary hemochromatosis gene.</title>
        <authorList>
            <person name="Beutler E."/>
            <person name="Gelbart T."/>
            <person name="West C."/>
            <person name="Kuhl W."/>
            <person name="Lee P."/>
        </authorList>
    </citation>
    <scope>PARTIAL NUCLEOTIDE SEQUENCE [MRNA]</scope>
    <source>
        <tissue>Ovary</tissue>
    </source>
</reference>
<reference key="7">
    <citation type="journal article" date="2008" name="Proc. Natl. Acad. Sci. U.S.A.">
        <title>A quantitative atlas of mitotic phosphorylation.</title>
        <authorList>
            <person name="Dephoure N."/>
            <person name="Zhou C."/>
            <person name="Villen J."/>
            <person name="Beausoleil S.A."/>
            <person name="Bakalarski C.E."/>
            <person name="Elledge S.J."/>
            <person name="Gygi S.P."/>
        </authorList>
    </citation>
    <scope>PHOSPHORYLATION [LARGE SCALE ANALYSIS] AT SER-12</scope>
    <scope>IDENTIFICATION BY MASS SPECTROMETRY [LARGE SCALE ANALYSIS]</scope>
    <source>
        <tissue>Cervix carcinoma</tissue>
    </source>
</reference>
<reference key="8">
    <citation type="journal article" date="2010" name="Sci. Signal.">
        <title>Quantitative phosphoproteomics reveals widespread full phosphorylation site occupancy during mitosis.</title>
        <authorList>
            <person name="Olsen J.V."/>
            <person name="Vermeulen M."/>
            <person name="Santamaria A."/>
            <person name="Kumar C."/>
            <person name="Miller M.L."/>
            <person name="Jensen L.J."/>
            <person name="Gnad F."/>
            <person name="Cox J."/>
            <person name="Jensen T.S."/>
            <person name="Nigg E.A."/>
            <person name="Brunak S."/>
            <person name="Mann M."/>
        </authorList>
    </citation>
    <scope>IDENTIFICATION BY MASS SPECTROMETRY [LARGE SCALE ANALYSIS]</scope>
    <source>
        <tissue>Cervix carcinoma</tissue>
    </source>
</reference>
<reference key="9">
    <citation type="journal article" date="2013" name="J. Proteome Res.">
        <title>Toward a comprehensive characterization of a human cancer cell phosphoproteome.</title>
        <authorList>
            <person name="Zhou H."/>
            <person name="Di Palma S."/>
            <person name="Preisinger C."/>
            <person name="Peng M."/>
            <person name="Polat A.N."/>
            <person name="Heck A.J."/>
            <person name="Mohammed S."/>
        </authorList>
    </citation>
    <scope>PHOSPHORYLATION [LARGE SCALE ANALYSIS] AT SER-12</scope>
    <scope>IDENTIFICATION BY MASS SPECTROMETRY [LARGE SCALE ANALYSIS]</scope>
    <source>
        <tissue>Cervix carcinoma</tissue>
        <tissue>Erythroleukemia</tissue>
    </source>
</reference>
<reference key="10">
    <citation type="journal article" date="2014" name="Nat. Struct. Mol. Biol.">
        <title>Uncovering global SUMOylation signaling networks in a site-specific manner.</title>
        <authorList>
            <person name="Hendriks I.A."/>
            <person name="D'Souza R.C."/>
            <person name="Yang B."/>
            <person name="Verlaan-de Vries M."/>
            <person name="Mann M."/>
            <person name="Vertegaal A.C."/>
        </authorList>
    </citation>
    <scope>SUMOYLATION [LARGE SCALE ANALYSIS] AT LYS-572</scope>
    <scope>IDENTIFICATION BY MASS SPECTROMETRY [LARGE SCALE ANALYSIS]</scope>
</reference>
<reference key="11">
    <citation type="journal article" date="2015" name="Cell Rep.">
        <title>SUMO-2 orchestrates chromatin modifiers in response to DNA damage.</title>
        <authorList>
            <person name="Hendriks I.A."/>
            <person name="Treffers L.W."/>
            <person name="Verlaan-de Vries M."/>
            <person name="Olsen J.V."/>
            <person name="Vertegaal A.C."/>
        </authorList>
    </citation>
    <scope>SUMOYLATION [LARGE SCALE ANALYSIS] AT LYS-572</scope>
    <scope>IDENTIFICATION BY MASS SPECTROMETRY [LARGE SCALE ANALYSIS]</scope>
</reference>
<reference key="12">
    <citation type="journal article" date="2017" name="Nat. Struct. Mol. Biol.">
        <title>Site-specific mapping of the human SUMO proteome reveals co-modification with phosphorylation.</title>
        <authorList>
            <person name="Hendriks I.A."/>
            <person name="Lyon D."/>
            <person name="Young C."/>
            <person name="Jensen L.J."/>
            <person name="Vertegaal A.C."/>
            <person name="Nielsen M.L."/>
        </authorList>
    </citation>
    <scope>SUMOYLATION [LARGE SCALE ANALYSIS] AT LYS-26; LYS-176; LYS-199; LYS-272; LYS-288; LYS-374; LYS-441; LYS-502 AND LYS-572</scope>
    <scope>IDENTIFICATION BY MASS SPECTROMETRY [LARGE SCALE ANALYSIS]</scope>
</reference>
<protein>
    <recommendedName>
        <fullName>Zinc finger protein with KRAB and SCAN domains 8</fullName>
    </recommendedName>
    <alternativeName>
        <fullName>LD5-1</fullName>
    </alternativeName>
    <alternativeName>
        <fullName>Zinc finger protein 192</fullName>
    </alternativeName>
</protein>
<evidence type="ECO:0000250" key="1">
    <source>
        <dbReference type="UniProtKB" id="P17029"/>
    </source>
</evidence>
<evidence type="ECO:0000255" key="2">
    <source>
        <dbReference type="PROSITE-ProRule" id="PRU00042"/>
    </source>
</evidence>
<evidence type="ECO:0000255" key="3">
    <source>
        <dbReference type="PROSITE-ProRule" id="PRU00119"/>
    </source>
</evidence>
<evidence type="ECO:0000255" key="4">
    <source>
        <dbReference type="PROSITE-ProRule" id="PRU00187"/>
    </source>
</evidence>
<evidence type="ECO:0000256" key="5">
    <source>
        <dbReference type="SAM" id="MobiDB-lite"/>
    </source>
</evidence>
<evidence type="ECO:0000269" key="6">
    <source>
    </source>
</evidence>
<evidence type="ECO:0000303" key="7">
    <source>
    </source>
</evidence>
<evidence type="ECO:0000305" key="8"/>
<evidence type="ECO:0007744" key="9">
    <source>
    </source>
</evidence>
<evidence type="ECO:0007744" key="10">
    <source>
    </source>
</evidence>
<evidence type="ECO:0007744" key="11">
    <source>
    </source>
</evidence>
<evidence type="ECO:0007744" key="12">
    <source>
    </source>
</evidence>
<evidence type="ECO:0007744" key="13">
    <source>
    </source>
</evidence>
<accession>Q15776</accession>
<accession>A1L3D4</accession>
<accession>B4DYF1</accession>
<accession>Q4VAR1</accession>
<accession>Q4VAR2</accession>
<accession>Q4VAR3</accession>
<accession>Q9H4T1</accession>